<evidence type="ECO:0000255" key="1">
    <source>
        <dbReference type="HAMAP-Rule" id="MF_00181"/>
    </source>
</evidence>
<reference key="1">
    <citation type="journal article" date="2007" name="PLoS ONE">
        <title>Paradoxical DNA repair and peroxide resistance gene conservation in Bacillus pumilus SAFR-032.</title>
        <authorList>
            <person name="Gioia J."/>
            <person name="Yerrapragada S."/>
            <person name="Qin X."/>
            <person name="Jiang H."/>
            <person name="Igboeli O.C."/>
            <person name="Muzny D."/>
            <person name="Dugan-Rocha S."/>
            <person name="Ding Y."/>
            <person name="Hawes A."/>
            <person name="Liu W."/>
            <person name="Perez L."/>
            <person name="Kovar C."/>
            <person name="Dinh H."/>
            <person name="Lee S."/>
            <person name="Nazareth L."/>
            <person name="Blyth P."/>
            <person name="Holder M."/>
            <person name="Buhay C."/>
            <person name="Tirumalai M.R."/>
            <person name="Liu Y."/>
            <person name="Dasgupta I."/>
            <person name="Bokhetache L."/>
            <person name="Fujita M."/>
            <person name="Karouia F."/>
            <person name="Eswara Moorthy P."/>
            <person name="Siefert J."/>
            <person name="Uzman A."/>
            <person name="Buzumbo P."/>
            <person name="Verma A."/>
            <person name="Zwiya H."/>
            <person name="McWilliams B.D."/>
            <person name="Olowu A."/>
            <person name="Clinkenbeard K.D."/>
            <person name="Newcombe D."/>
            <person name="Golebiewski L."/>
            <person name="Petrosino J.F."/>
            <person name="Nicholson W.L."/>
            <person name="Fox G.E."/>
            <person name="Venkateswaran K."/>
            <person name="Highlander S.K."/>
            <person name="Weinstock G.M."/>
        </authorList>
    </citation>
    <scope>NUCLEOTIDE SEQUENCE [LARGE SCALE GENOMIC DNA]</scope>
    <source>
        <strain>SAFR-032</strain>
    </source>
</reference>
<keyword id="KW-0031">Aminopeptidase</keyword>
<keyword id="KW-0963">Cytoplasm</keyword>
<keyword id="KW-0378">Hydrolase</keyword>
<keyword id="KW-0464">Manganese</keyword>
<keyword id="KW-0479">Metal-binding</keyword>
<keyword id="KW-0645">Protease</keyword>
<gene>
    <name evidence="1" type="primary">pepA</name>
    <name type="ordered locus">BPUM_2866</name>
</gene>
<organism>
    <name type="scientific">Bacillus pumilus (strain SAFR-032)</name>
    <dbReference type="NCBI Taxonomy" id="315750"/>
    <lineage>
        <taxon>Bacteria</taxon>
        <taxon>Bacillati</taxon>
        <taxon>Bacillota</taxon>
        <taxon>Bacilli</taxon>
        <taxon>Bacillales</taxon>
        <taxon>Bacillaceae</taxon>
        <taxon>Bacillus</taxon>
    </lineage>
</organism>
<dbReference type="EC" id="3.4.11.1" evidence="1"/>
<dbReference type="EC" id="3.4.11.10" evidence="1"/>
<dbReference type="EMBL" id="CP000813">
    <property type="protein sequence ID" value="ABV63521.1"/>
    <property type="molecule type" value="Genomic_DNA"/>
</dbReference>
<dbReference type="RefSeq" id="WP_012011129.1">
    <property type="nucleotide sequence ID" value="NC_009848.4"/>
</dbReference>
<dbReference type="SMR" id="A8FH04"/>
<dbReference type="STRING" id="315750.BPUM_2866"/>
<dbReference type="MEROPS" id="M17.010"/>
<dbReference type="GeneID" id="5622155"/>
<dbReference type="KEGG" id="bpu:BPUM_2866"/>
<dbReference type="eggNOG" id="COG0260">
    <property type="taxonomic scope" value="Bacteria"/>
</dbReference>
<dbReference type="HOGENOM" id="CLU_013734_6_0_9"/>
<dbReference type="OrthoDB" id="9809354at2"/>
<dbReference type="Proteomes" id="UP000001355">
    <property type="component" value="Chromosome"/>
</dbReference>
<dbReference type="GO" id="GO:0005737">
    <property type="term" value="C:cytoplasm"/>
    <property type="evidence" value="ECO:0007669"/>
    <property type="project" value="UniProtKB-SubCell"/>
</dbReference>
<dbReference type="GO" id="GO:0030145">
    <property type="term" value="F:manganese ion binding"/>
    <property type="evidence" value="ECO:0007669"/>
    <property type="project" value="UniProtKB-UniRule"/>
</dbReference>
<dbReference type="GO" id="GO:0070006">
    <property type="term" value="F:metalloaminopeptidase activity"/>
    <property type="evidence" value="ECO:0007669"/>
    <property type="project" value="InterPro"/>
</dbReference>
<dbReference type="GO" id="GO:0006508">
    <property type="term" value="P:proteolysis"/>
    <property type="evidence" value="ECO:0007669"/>
    <property type="project" value="UniProtKB-KW"/>
</dbReference>
<dbReference type="CDD" id="cd00433">
    <property type="entry name" value="Peptidase_M17"/>
    <property type="match status" value="1"/>
</dbReference>
<dbReference type="Gene3D" id="3.40.220.10">
    <property type="entry name" value="Leucine Aminopeptidase, subunit E, domain 1"/>
    <property type="match status" value="1"/>
</dbReference>
<dbReference type="Gene3D" id="3.40.630.10">
    <property type="entry name" value="Zn peptidases"/>
    <property type="match status" value="1"/>
</dbReference>
<dbReference type="HAMAP" id="MF_00181">
    <property type="entry name" value="Cytosol_peptidase_M17"/>
    <property type="match status" value="1"/>
</dbReference>
<dbReference type="InterPro" id="IPR011356">
    <property type="entry name" value="Leucine_aapep/pepB"/>
</dbReference>
<dbReference type="InterPro" id="IPR043472">
    <property type="entry name" value="Macro_dom-like"/>
</dbReference>
<dbReference type="InterPro" id="IPR000819">
    <property type="entry name" value="Peptidase_M17_C"/>
</dbReference>
<dbReference type="InterPro" id="IPR023042">
    <property type="entry name" value="Peptidase_M17_leu_NH2_pept"/>
</dbReference>
<dbReference type="InterPro" id="IPR008283">
    <property type="entry name" value="Peptidase_M17_N"/>
</dbReference>
<dbReference type="NCBIfam" id="NF002073">
    <property type="entry name" value="PRK00913.1-2"/>
    <property type="match status" value="1"/>
</dbReference>
<dbReference type="NCBIfam" id="NF002074">
    <property type="entry name" value="PRK00913.1-4"/>
    <property type="match status" value="1"/>
</dbReference>
<dbReference type="NCBIfam" id="NF002083">
    <property type="entry name" value="PRK00913.3-5"/>
    <property type="match status" value="1"/>
</dbReference>
<dbReference type="PANTHER" id="PTHR11963:SF23">
    <property type="entry name" value="CYTOSOL AMINOPEPTIDASE"/>
    <property type="match status" value="1"/>
</dbReference>
<dbReference type="PANTHER" id="PTHR11963">
    <property type="entry name" value="LEUCINE AMINOPEPTIDASE-RELATED"/>
    <property type="match status" value="1"/>
</dbReference>
<dbReference type="Pfam" id="PF00883">
    <property type="entry name" value="Peptidase_M17"/>
    <property type="match status" value="1"/>
</dbReference>
<dbReference type="Pfam" id="PF02789">
    <property type="entry name" value="Peptidase_M17_N"/>
    <property type="match status" value="1"/>
</dbReference>
<dbReference type="PRINTS" id="PR00481">
    <property type="entry name" value="LAMNOPPTDASE"/>
</dbReference>
<dbReference type="SUPFAM" id="SSF52949">
    <property type="entry name" value="Macro domain-like"/>
    <property type="match status" value="1"/>
</dbReference>
<dbReference type="SUPFAM" id="SSF53187">
    <property type="entry name" value="Zn-dependent exopeptidases"/>
    <property type="match status" value="1"/>
</dbReference>
<dbReference type="PROSITE" id="PS00631">
    <property type="entry name" value="CYTOSOL_AP"/>
    <property type="match status" value="1"/>
</dbReference>
<sequence>MFFSTNELQHKDTLAIGLFQKSQLSGKAKEMDELLEGRITELLKEGDISSKRNQLSKFFPSPETGIKRIYFVGLGKESDYTFEEAKEGFAHLFRKLHQDKKQAVSVLLDTFIGKDLPAQDAAHTLSESCLLATYELQDFKHKTNEPDRFIEFVYAMTDHDTTEIQASLKVGEVYGQSVNSARTLVNMPPNMLTSSDLASYAAELAYKYEFEIEILDKEQMEELGMGGILAVNRGSTEPPKLIVLKYQGKEEWTDVIGLVGKGITYDTGGYSLKPRASMIGMKTDMGGSASVLGAMEIIGELRPEQNVIAVIASTDNMISADAMKPDDVIVSLSGKTIEVLNTDAEGRLVLADGVTYAKQHGASVLIDVATLTGGVIVALGNETTGVMTNNDELYAQFKEASEECGEMIWQLPITEKDKKRVRNSKMADLNNSPGRDGHAIMAGAFIGEFAENTPWVHLDIAGTATTEKPSCFGPTGATGVMVRSLATFVERFEGKK</sequence>
<comment type="function">
    <text evidence="1">Presumably involved in the processing and regular turnover of intracellular proteins. Catalyzes the removal of unsubstituted N-terminal amino acids from various peptides.</text>
</comment>
<comment type="catalytic activity">
    <reaction evidence="1">
        <text>Release of an N-terminal amino acid, Xaa-|-Yaa-, in which Xaa is preferably Leu, but may be other amino acids including Pro although not Arg or Lys, and Yaa may be Pro. Amino acid amides and methyl esters are also readily hydrolyzed, but rates on arylamides are exceedingly low.</text>
        <dbReference type="EC" id="3.4.11.1"/>
    </reaction>
</comment>
<comment type="catalytic activity">
    <reaction evidence="1">
        <text>Release of an N-terminal amino acid, preferentially leucine, but not glutamic or aspartic acids.</text>
        <dbReference type="EC" id="3.4.11.10"/>
    </reaction>
</comment>
<comment type="cofactor">
    <cofactor evidence="1">
        <name>Mn(2+)</name>
        <dbReference type="ChEBI" id="CHEBI:29035"/>
    </cofactor>
    <text evidence="1">Binds 2 manganese ions per subunit.</text>
</comment>
<comment type="subcellular location">
    <subcellularLocation>
        <location evidence="1">Cytoplasm</location>
    </subcellularLocation>
</comment>
<comment type="similarity">
    <text evidence="1">Belongs to the peptidase M17 family.</text>
</comment>
<protein>
    <recommendedName>
        <fullName evidence="1">Probable cytosol aminopeptidase</fullName>
        <ecNumber evidence="1">3.4.11.1</ecNumber>
    </recommendedName>
    <alternativeName>
        <fullName evidence="1">Leucine aminopeptidase</fullName>
        <shortName evidence="1">LAP</shortName>
        <ecNumber evidence="1">3.4.11.10</ecNumber>
    </alternativeName>
    <alternativeName>
        <fullName evidence="1">Leucyl aminopeptidase</fullName>
    </alternativeName>
</protein>
<accession>A8FH04</accession>
<name>AMPA_BACP2</name>
<feature type="chain" id="PRO_1000058385" description="Probable cytosol aminopeptidase">
    <location>
        <begin position="1"/>
        <end position="496"/>
    </location>
</feature>
<feature type="active site" evidence="1">
    <location>
        <position position="273"/>
    </location>
</feature>
<feature type="active site" evidence="1">
    <location>
        <position position="347"/>
    </location>
</feature>
<feature type="binding site" evidence="1">
    <location>
        <position position="261"/>
    </location>
    <ligand>
        <name>Mn(2+)</name>
        <dbReference type="ChEBI" id="CHEBI:29035"/>
        <label>2</label>
    </ligand>
</feature>
<feature type="binding site" evidence="1">
    <location>
        <position position="266"/>
    </location>
    <ligand>
        <name>Mn(2+)</name>
        <dbReference type="ChEBI" id="CHEBI:29035"/>
        <label>1</label>
    </ligand>
</feature>
<feature type="binding site" evidence="1">
    <location>
        <position position="266"/>
    </location>
    <ligand>
        <name>Mn(2+)</name>
        <dbReference type="ChEBI" id="CHEBI:29035"/>
        <label>2</label>
    </ligand>
</feature>
<feature type="binding site" evidence="1">
    <location>
        <position position="284"/>
    </location>
    <ligand>
        <name>Mn(2+)</name>
        <dbReference type="ChEBI" id="CHEBI:29035"/>
        <label>2</label>
    </ligand>
</feature>
<feature type="binding site" evidence="1">
    <location>
        <position position="343"/>
    </location>
    <ligand>
        <name>Mn(2+)</name>
        <dbReference type="ChEBI" id="CHEBI:29035"/>
        <label>1</label>
    </ligand>
</feature>
<feature type="binding site" evidence="1">
    <location>
        <position position="345"/>
    </location>
    <ligand>
        <name>Mn(2+)</name>
        <dbReference type="ChEBI" id="CHEBI:29035"/>
        <label>1</label>
    </ligand>
</feature>
<feature type="binding site" evidence="1">
    <location>
        <position position="345"/>
    </location>
    <ligand>
        <name>Mn(2+)</name>
        <dbReference type="ChEBI" id="CHEBI:29035"/>
        <label>2</label>
    </ligand>
</feature>
<proteinExistence type="inferred from homology"/>